<reference key="1">
    <citation type="journal article" date="2012" name="MBio">
        <title>Identification, characterization, and in vitro culture of highly divergent arenaviruses from bosysa constrictors and annulated tree boas: candidate etiological agents for snake inclusion body disease.</title>
        <authorList>
            <person name="Stenglein M.D."/>
            <person name="Sanders C."/>
            <person name="Kistler A.L."/>
            <person name="Ruby J.G."/>
            <person name="Franco J.Y."/>
            <person name="Reavill D.R."/>
            <person name="Dunker F."/>
            <person name="Derisi J.L."/>
        </authorList>
    </citation>
    <scope>NUCLEOTIDE SEQUENCE [LARGE SCALE GENOMIC DNA]</scope>
</reference>
<keyword id="KW-0167">Capsid protein</keyword>
<keyword id="KW-1139">Helical capsid protein</keyword>
<keyword id="KW-1035">Host cytoplasm</keyword>
<keyword id="KW-0945">Host-virus interaction</keyword>
<keyword id="KW-1224">Inhibition of host IKBKE by virus</keyword>
<keyword id="KW-1090">Inhibition of host innate immune response by virus</keyword>
<keyword id="KW-1113">Inhibition of host RLR pathway by virus</keyword>
<keyword id="KW-0922">Interferon antiviral system evasion</keyword>
<keyword id="KW-0479">Metal-binding</keyword>
<keyword id="KW-1185">Reference proteome</keyword>
<keyword id="KW-0687">Ribonucleoprotein</keyword>
<keyword id="KW-0694">RNA-binding</keyword>
<keyword id="KW-0899">Viral immunoevasion</keyword>
<keyword id="KW-0543">Viral nucleoprotein</keyword>
<keyword id="KW-0946">Virion</keyword>
<keyword id="KW-0862">Zinc</keyword>
<keyword id="KW-0863">Zinc-finger</keyword>
<name>NCAP_GOGV</name>
<sequence>MAAFQKAAVNQLALKKKLNKMLAPYQRELNNQIFKDVKALRVGLDINKVNDTLRRLRKETKGPNDLKNLRDLNETAAGLSGMVATQRTVEIDSSLMSDEELIQCIENIDVIKKKAEYKGGSRPRISEFESETGMSKSDHEMFNKLFNRFAPKKDPGPAAFSTPKSWVGISPADLANQFGTSPAITICLIMMRTNSPFKQILDALHDISLLDQGMFVNASVVKAMTSQHPCLDCVEYTVPKNSSGYNITVKAVVKAANVLSKLPKVEKLVIDDDNRVEIIRTLLTIQRELNIKIQVNEERGLFEDIFYKICVSPNGPCVVSIRSELTGRGWENTIFRLRRPPPYAPRLYPDLMDLDLDALPPVKGDKKTEEESKIYIFKPAADEIDEYIRSPESASSDSEIPDPRVLYMANACEDLFKGGDSVFMDIEGTAQDPVEIALFNPDTGKFVHIFRMPKDKDGFKKASKHAHGLLLDDISDHPDLQTDKNIEAFFSKVPLSARIFCQGSDIEECLKFFGRKDLKPTDCKWKREEFMKYHENILDELSEVFPCKHSGTVKDKKGALTAPHCALLDCLMFSRTASGGKKTKDPTPATI</sequence>
<comment type="function">
    <text evidence="2">Encapsidates the genome, protecting it from nucleases. The encapsidated genomic RNA is termed the nucleocapsid (NC). Serves as template for viral transcription and replication.</text>
</comment>
<comment type="subunit">
    <text evidence="2">Homomultimerizes to form the nucleocapsid. Binds to viral genomic RNA.</text>
</comment>
<comment type="subcellular location">
    <subcellularLocation>
        <location evidence="2">Virion</location>
    </subcellularLocation>
    <subcellularLocation>
        <location evidence="2">Host cytoplasm</location>
    </subcellularLocation>
</comment>
<comment type="similarity">
    <text evidence="3">Belongs to the arenaviridae nucleocapsid protein family.</text>
</comment>
<evidence type="ECO:0000250" key="1"/>
<evidence type="ECO:0000250" key="2">
    <source>
        <dbReference type="UniProtKB" id="P09992"/>
    </source>
</evidence>
<evidence type="ECO:0000305" key="3"/>
<dbReference type="EMBL" id="JQ717264">
    <property type="protein sequence ID" value="AFP93556.1"/>
    <property type="molecule type" value="Genomic_RNA"/>
</dbReference>
<dbReference type="RefSeq" id="YP_006590091.1">
    <property type="nucleotide sequence ID" value="NC_018483.1"/>
</dbReference>
<dbReference type="SMR" id="J7H5M4"/>
<dbReference type="GeneID" id="13466438"/>
<dbReference type="KEGG" id="vg:13466438"/>
<dbReference type="OrthoDB" id="3135at10239"/>
<dbReference type="Proteomes" id="UP000134698">
    <property type="component" value="Genome"/>
</dbReference>
<dbReference type="GO" id="GO:0019029">
    <property type="term" value="C:helical viral capsid"/>
    <property type="evidence" value="ECO:0007669"/>
    <property type="project" value="UniProtKB-KW"/>
</dbReference>
<dbReference type="GO" id="GO:0030430">
    <property type="term" value="C:host cell cytoplasm"/>
    <property type="evidence" value="ECO:0007669"/>
    <property type="project" value="UniProtKB-SubCell"/>
</dbReference>
<dbReference type="GO" id="GO:1990904">
    <property type="term" value="C:ribonucleoprotein complex"/>
    <property type="evidence" value="ECO:0007669"/>
    <property type="project" value="UniProtKB-KW"/>
</dbReference>
<dbReference type="GO" id="GO:0019013">
    <property type="term" value="C:viral nucleocapsid"/>
    <property type="evidence" value="ECO:0007669"/>
    <property type="project" value="UniProtKB-KW"/>
</dbReference>
<dbReference type="GO" id="GO:0003723">
    <property type="term" value="F:RNA binding"/>
    <property type="evidence" value="ECO:0007669"/>
    <property type="project" value="UniProtKB-KW"/>
</dbReference>
<dbReference type="GO" id="GO:0008270">
    <property type="term" value="F:zinc ion binding"/>
    <property type="evidence" value="ECO:0007669"/>
    <property type="project" value="UniProtKB-KW"/>
</dbReference>
<dbReference type="GO" id="GO:0039724">
    <property type="term" value="P:symbiont-mediated suppression of host cytoplasmic pattern recognition receptor signaling pathway via inhibition of IKBKE activity"/>
    <property type="evidence" value="ECO:0007669"/>
    <property type="project" value="UniProtKB-KW"/>
</dbReference>
<dbReference type="Gene3D" id="3.30.420.410">
    <property type="entry name" value="Arenaviral nucleoprotein, C-terminal domain"/>
    <property type="match status" value="1"/>
</dbReference>
<dbReference type="Gene3D" id="1.10.150.550">
    <property type="entry name" value="Arenavirus nucleocapsid protein, head domain"/>
    <property type="match status" value="1"/>
</dbReference>
<dbReference type="InterPro" id="IPR035084">
    <property type="entry name" value="Nucleocapsid_C_arenaviridae"/>
</dbReference>
<dbReference type="InterPro" id="IPR038115">
    <property type="entry name" value="Nucleocapsid_C_sf"/>
</dbReference>
<dbReference type="InterPro" id="IPR035083">
    <property type="entry name" value="Nucleocapsid_N_arenaviridae"/>
</dbReference>
<dbReference type="Pfam" id="PF17290">
    <property type="entry name" value="Arena_ncap_C"/>
    <property type="match status" value="1"/>
</dbReference>
<dbReference type="Pfam" id="PF00843">
    <property type="entry name" value="Arena_nucleocap"/>
    <property type="match status" value="1"/>
</dbReference>
<proteinExistence type="inferred from homology"/>
<protein>
    <recommendedName>
        <fullName>Nucleoprotein</fullName>
    </recommendedName>
    <alternativeName>
        <fullName>Nucleocapsid protein</fullName>
    </alternativeName>
    <alternativeName>
        <fullName>Protein N</fullName>
    </alternativeName>
</protein>
<feature type="chain" id="PRO_0000443033" description="Nucleoprotein">
    <location>
        <begin position="1"/>
        <end position="591"/>
    </location>
</feature>
<feature type="zinc finger region" description="CHCC-type, atypical" evidence="1">
    <location>
        <begin position="545"/>
        <end position="570"/>
    </location>
</feature>
<organism>
    <name type="scientific">Alethinophid 1 reptarenavirus (isolate AlRrV1/Boa/USA/BC/2009)</name>
    <name type="common">Golden Gate virus</name>
    <dbReference type="NCBI Taxonomy" id="1223562"/>
    <lineage>
        <taxon>Viruses</taxon>
        <taxon>Riboviria</taxon>
        <taxon>Orthornavirae</taxon>
        <taxon>Negarnaviricota</taxon>
        <taxon>Polyploviricotina</taxon>
        <taxon>Ellioviricetes</taxon>
        <taxon>Bunyavirales</taxon>
        <taxon>Arenaviridae</taxon>
        <taxon>Reptarenavirus</taxon>
        <taxon>Reptarenavirus aurei</taxon>
    </lineage>
</organism>
<accession>J7H5M4</accession>
<gene>
    <name type="primary">N</name>
    <name type="synonym">NP</name>
    <name type="ordered locus">Segment S</name>
</gene>
<organismHost>
    <name type="scientific">Boa constrictor</name>
    <name type="common">Boa</name>
    <dbReference type="NCBI Taxonomy" id="8574"/>
</organismHost>